<gene>
    <name evidence="1" type="primary">ndk</name>
    <name type="ordered locus">Wbm0717</name>
</gene>
<proteinExistence type="inferred from homology"/>
<organism>
    <name type="scientific">Wolbachia sp. subsp. Brugia malayi (strain TRS)</name>
    <dbReference type="NCBI Taxonomy" id="292805"/>
    <lineage>
        <taxon>Bacteria</taxon>
        <taxon>Pseudomonadati</taxon>
        <taxon>Pseudomonadota</taxon>
        <taxon>Alphaproteobacteria</taxon>
        <taxon>Rickettsiales</taxon>
        <taxon>Anaplasmataceae</taxon>
        <taxon>Wolbachieae</taxon>
        <taxon>Wolbachia</taxon>
    </lineage>
</organism>
<name>NDK_WOLTR</name>
<evidence type="ECO:0000255" key="1">
    <source>
        <dbReference type="HAMAP-Rule" id="MF_00451"/>
    </source>
</evidence>
<reference key="1">
    <citation type="journal article" date="2005" name="PLoS Biol.">
        <title>The Wolbachia genome of Brugia malayi: endosymbiont evolution within a human pathogenic nematode.</title>
        <authorList>
            <person name="Foster J."/>
            <person name="Ganatra M."/>
            <person name="Kamal I."/>
            <person name="Ware J."/>
            <person name="Makarova K."/>
            <person name="Ivanova N."/>
            <person name="Bhattacharyya A."/>
            <person name="Kapatral V."/>
            <person name="Kumar S."/>
            <person name="Posfai J."/>
            <person name="Vincze T."/>
            <person name="Ingram J."/>
            <person name="Moran L."/>
            <person name="Lapidus A."/>
            <person name="Omelchenko M."/>
            <person name="Kyrpides N."/>
            <person name="Ghedin E."/>
            <person name="Wang S."/>
            <person name="Goltsman E."/>
            <person name="Joukov V."/>
            <person name="Ostrovskaya O."/>
            <person name="Tsukerman K."/>
            <person name="Mazur M."/>
            <person name="Comb D."/>
            <person name="Koonin E."/>
            <person name="Slatko B."/>
        </authorList>
    </citation>
    <scope>NUCLEOTIDE SEQUENCE [LARGE SCALE GENOMIC DNA]</scope>
    <source>
        <strain>TRS</strain>
    </source>
</reference>
<sequence>MAIERTLSILKPDTVKNNIIGNINSYIEKSGLRIIAQKMMLLTKKQAELFYAIHKDRPFFGGLVEFMTSGPVIVQVLVGENAISKYRQIMGATDPKQADKGTIRGDFADDVNENRVHGSDSLENAHKEIAFFFAECELV</sequence>
<comment type="function">
    <text evidence="1">Major role in the synthesis of nucleoside triphosphates other than ATP. The ATP gamma phosphate is transferred to the NDP beta phosphate via a ping-pong mechanism, using a phosphorylated active-site intermediate.</text>
</comment>
<comment type="catalytic activity">
    <reaction evidence="1">
        <text>a 2'-deoxyribonucleoside 5'-diphosphate + ATP = a 2'-deoxyribonucleoside 5'-triphosphate + ADP</text>
        <dbReference type="Rhea" id="RHEA:44640"/>
        <dbReference type="ChEBI" id="CHEBI:30616"/>
        <dbReference type="ChEBI" id="CHEBI:61560"/>
        <dbReference type="ChEBI" id="CHEBI:73316"/>
        <dbReference type="ChEBI" id="CHEBI:456216"/>
        <dbReference type="EC" id="2.7.4.6"/>
    </reaction>
</comment>
<comment type="catalytic activity">
    <reaction evidence="1">
        <text>a ribonucleoside 5'-diphosphate + ATP = a ribonucleoside 5'-triphosphate + ADP</text>
        <dbReference type="Rhea" id="RHEA:18113"/>
        <dbReference type="ChEBI" id="CHEBI:30616"/>
        <dbReference type="ChEBI" id="CHEBI:57930"/>
        <dbReference type="ChEBI" id="CHEBI:61557"/>
        <dbReference type="ChEBI" id="CHEBI:456216"/>
        <dbReference type="EC" id="2.7.4.6"/>
    </reaction>
</comment>
<comment type="cofactor">
    <cofactor evidence="1">
        <name>Mg(2+)</name>
        <dbReference type="ChEBI" id="CHEBI:18420"/>
    </cofactor>
</comment>
<comment type="subunit">
    <text evidence="1">Homotetramer.</text>
</comment>
<comment type="subcellular location">
    <subcellularLocation>
        <location evidence="1">Cytoplasm</location>
    </subcellularLocation>
</comment>
<comment type="similarity">
    <text evidence="1">Belongs to the NDK family.</text>
</comment>
<protein>
    <recommendedName>
        <fullName evidence="1">Nucleoside diphosphate kinase</fullName>
        <shortName evidence="1">NDK</shortName>
        <shortName evidence="1">NDP kinase</shortName>
        <ecNumber evidence="1">2.7.4.6</ecNumber>
    </recommendedName>
    <alternativeName>
        <fullName evidence="1">Nucleoside-2-P kinase</fullName>
    </alternativeName>
</protein>
<accession>Q5GRR9</accession>
<keyword id="KW-0067">ATP-binding</keyword>
<keyword id="KW-0963">Cytoplasm</keyword>
<keyword id="KW-0418">Kinase</keyword>
<keyword id="KW-0460">Magnesium</keyword>
<keyword id="KW-0479">Metal-binding</keyword>
<keyword id="KW-0546">Nucleotide metabolism</keyword>
<keyword id="KW-0547">Nucleotide-binding</keyword>
<keyword id="KW-0597">Phosphoprotein</keyword>
<keyword id="KW-1185">Reference proteome</keyword>
<keyword id="KW-0808">Transferase</keyword>
<feature type="chain" id="PRO_0000137078" description="Nucleoside diphosphate kinase">
    <location>
        <begin position="1"/>
        <end position="139"/>
    </location>
</feature>
<feature type="active site" description="Pros-phosphohistidine intermediate" evidence="1">
    <location>
        <position position="117"/>
    </location>
</feature>
<feature type="binding site" evidence="1">
    <location>
        <position position="11"/>
    </location>
    <ligand>
        <name>ATP</name>
        <dbReference type="ChEBI" id="CHEBI:30616"/>
    </ligand>
</feature>
<feature type="binding site" evidence="1">
    <location>
        <position position="59"/>
    </location>
    <ligand>
        <name>ATP</name>
        <dbReference type="ChEBI" id="CHEBI:30616"/>
    </ligand>
</feature>
<feature type="binding site" evidence="1">
    <location>
        <position position="87"/>
    </location>
    <ligand>
        <name>ATP</name>
        <dbReference type="ChEBI" id="CHEBI:30616"/>
    </ligand>
</feature>
<feature type="binding site" evidence="1">
    <location>
        <position position="93"/>
    </location>
    <ligand>
        <name>ATP</name>
        <dbReference type="ChEBI" id="CHEBI:30616"/>
    </ligand>
</feature>
<feature type="binding site" evidence="1">
    <location>
        <position position="104"/>
    </location>
    <ligand>
        <name>ATP</name>
        <dbReference type="ChEBI" id="CHEBI:30616"/>
    </ligand>
</feature>
<feature type="binding site" evidence="1">
    <location>
        <position position="114"/>
    </location>
    <ligand>
        <name>ATP</name>
        <dbReference type="ChEBI" id="CHEBI:30616"/>
    </ligand>
</feature>
<dbReference type="EC" id="2.7.4.6" evidence="1"/>
<dbReference type="EMBL" id="AE017321">
    <property type="protein sequence ID" value="AAW71305.1"/>
    <property type="molecule type" value="Genomic_DNA"/>
</dbReference>
<dbReference type="RefSeq" id="WP_011256914.1">
    <property type="nucleotide sequence ID" value="NC_006833.1"/>
</dbReference>
<dbReference type="SMR" id="Q5GRR9"/>
<dbReference type="STRING" id="292805.Wbm0717"/>
<dbReference type="KEGG" id="wbm:Wbm0717"/>
<dbReference type="eggNOG" id="COG0105">
    <property type="taxonomic scope" value="Bacteria"/>
</dbReference>
<dbReference type="HOGENOM" id="CLU_060216_8_1_5"/>
<dbReference type="Proteomes" id="UP000000534">
    <property type="component" value="Chromosome"/>
</dbReference>
<dbReference type="GO" id="GO:0005737">
    <property type="term" value="C:cytoplasm"/>
    <property type="evidence" value="ECO:0007669"/>
    <property type="project" value="UniProtKB-SubCell"/>
</dbReference>
<dbReference type="GO" id="GO:0005524">
    <property type="term" value="F:ATP binding"/>
    <property type="evidence" value="ECO:0007669"/>
    <property type="project" value="UniProtKB-UniRule"/>
</dbReference>
<dbReference type="GO" id="GO:0046872">
    <property type="term" value="F:metal ion binding"/>
    <property type="evidence" value="ECO:0007669"/>
    <property type="project" value="UniProtKB-KW"/>
</dbReference>
<dbReference type="GO" id="GO:0004550">
    <property type="term" value="F:nucleoside diphosphate kinase activity"/>
    <property type="evidence" value="ECO:0007669"/>
    <property type="project" value="UniProtKB-UniRule"/>
</dbReference>
<dbReference type="GO" id="GO:0006241">
    <property type="term" value="P:CTP biosynthetic process"/>
    <property type="evidence" value="ECO:0007669"/>
    <property type="project" value="UniProtKB-UniRule"/>
</dbReference>
<dbReference type="GO" id="GO:0006183">
    <property type="term" value="P:GTP biosynthetic process"/>
    <property type="evidence" value="ECO:0007669"/>
    <property type="project" value="UniProtKB-UniRule"/>
</dbReference>
<dbReference type="GO" id="GO:0006228">
    <property type="term" value="P:UTP biosynthetic process"/>
    <property type="evidence" value="ECO:0007669"/>
    <property type="project" value="UniProtKB-UniRule"/>
</dbReference>
<dbReference type="CDD" id="cd04413">
    <property type="entry name" value="NDPk_I"/>
    <property type="match status" value="1"/>
</dbReference>
<dbReference type="FunFam" id="3.30.70.141:FF:000001">
    <property type="entry name" value="Nucleoside diphosphate kinase"/>
    <property type="match status" value="1"/>
</dbReference>
<dbReference type="Gene3D" id="3.30.70.141">
    <property type="entry name" value="Nucleoside diphosphate kinase-like domain"/>
    <property type="match status" value="1"/>
</dbReference>
<dbReference type="HAMAP" id="MF_00451">
    <property type="entry name" value="NDP_kinase"/>
    <property type="match status" value="1"/>
</dbReference>
<dbReference type="InterPro" id="IPR034907">
    <property type="entry name" value="NDK-like_dom"/>
</dbReference>
<dbReference type="InterPro" id="IPR036850">
    <property type="entry name" value="NDK-like_dom_sf"/>
</dbReference>
<dbReference type="InterPro" id="IPR001564">
    <property type="entry name" value="Nucleoside_diP_kinase"/>
</dbReference>
<dbReference type="InterPro" id="IPR023005">
    <property type="entry name" value="Nucleoside_diP_kinase_AS"/>
</dbReference>
<dbReference type="NCBIfam" id="NF001908">
    <property type="entry name" value="PRK00668.1"/>
    <property type="match status" value="1"/>
</dbReference>
<dbReference type="PANTHER" id="PTHR46161">
    <property type="entry name" value="NUCLEOSIDE DIPHOSPHATE KINASE"/>
    <property type="match status" value="1"/>
</dbReference>
<dbReference type="PANTHER" id="PTHR46161:SF3">
    <property type="entry name" value="NUCLEOSIDE DIPHOSPHATE KINASE DDB_G0292928-RELATED"/>
    <property type="match status" value="1"/>
</dbReference>
<dbReference type="Pfam" id="PF00334">
    <property type="entry name" value="NDK"/>
    <property type="match status" value="1"/>
</dbReference>
<dbReference type="PRINTS" id="PR01243">
    <property type="entry name" value="NUCDPKINASE"/>
</dbReference>
<dbReference type="SMART" id="SM00562">
    <property type="entry name" value="NDK"/>
    <property type="match status" value="1"/>
</dbReference>
<dbReference type="SUPFAM" id="SSF54919">
    <property type="entry name" value="Nucleoside diphosphate kinase, NDK"/>
    <property type="match status" value="1"/>
</dbReference>
<dbReference type="PROSITE" id="PS00469">
    <property type="entry name" value="NDPK"/>
    <property type="match status" value="1"/>
</dbReference>
<dbReference type="PROSITE" id="PS51374">
    <property type="entry name" value="NDPK_LIKE"/>
    <property type="match status" value="1"/>
</dbReference>